<sequence length="43" mass="4972">MAKLHDYYKDEVVQKLMSQFGYHSVMQVPRVEKITLNMGVGEA</sequence>
<protein>
    <recommendedName>
        <fullName evidence="2">Large ribosomal subunit protein uL5</fullName>
    </recommendedName>
    <alternativeName>
        <fullName>50S ribosomal protein L5</fullName>
    </alternativeName>
</protein>
<gene>
    <name type="primary">rplE</name>
</gene>
<accession>P20031</accession>
<comment type="function">
    <text evidence="1">This is one of the proteins that bind and probably mediate the attachment of the 5S RNA into the large ribosomal subunit, where it forms part of the central protuberance. In the 70S ribosome it contacts protein S13 of the 30S subunit (bridge B1b), connecting the 2 subunits; this bridge is implicated in subunit movement. Contacts the P site tRNA; the 5S rRNA and some of its associated proteins might help stabilize positioning of ribosome-bound tRNAs (By similarity).</text>
</comment>
<comment type="subunit">
    <text evidence="1">Part of the 50S ribosomal subunit; part of the 5S rRNA/L5/L18/L25 subcomplex. Contacts the 5S rRNA and the P site tRNA. Forms a bridge to the 30S subunit in the 70S ribosome (By similarity).</text>
</comment>
<comment type="similarity">
    <text evidence="2">Belongs to the universal ribosomal protein uL5 family.</text>
</comment>
<name>RL5_PROVU</name>
<proteinExistence type="inferred from homology"/>
<dbReference type="EMBL" id="M36264">
    <property type="protein sequence ID" value="AAA25662.1"/>
    <property type="molecule type" value="Genomic_DNA"/>
</dbReference>
<dbReference type="SMR" id="P20031"/>
<dbReference type="STRING" id="585.DR95_2131"/>
<dbReference type="eggNOG" id="COG0094">
    <property type="taxonomic scope" value="Bacteria"/>
</dbReference>
<dbReference type="GO" id="GO:1990904">
    <property type="term" value="C:ribonucleoprotein complex"/>
    <property type="evidence" value="ECO:0007669"/>
    <property type="project" value="UniProtKB-KW"/>
</dbReference>
<dbReference type="GO" id="GO:0005840">
    <property type="term" value="C:ribosome"/>
    <property type="evidence" value="ECO:0007669"/>
    <property type="project" value="UniProtKB-KW"/>
</dbReference>
<dbReference type="GO" id="GO:0019843">
    <property type="term" value="F:rRNA binding"/>
    <property type="evidence" value="ECO:0007669"/>
    <property type="project" value="UniProtKB-KW"/>
</dbReference>
<dbReference type="GO" id="GO:0000049">
    <property type="term" value="F:tRNA binding"/>
    <property type="evidence" value="ECO:0007669"/>
    <property type="project" value="UniProtKB-KW"/>
</dbReference>
<dbReference type="Gene3D" id="3.30.1440.10">
    <property type="match status" value="1"/>
</dbReference>
<dbReference type="InterPro" id="IPR022803">
    <property type="entry name" value="Ribosomal_uL5_dom_sf"/>
</dbReference>
<dbReference type="SUPFAM" id="SSF55282">
    <property type="entry name" value="RL5-like"/>
    <property type="match status" value="1"/>
</dbReference>
<feature type="initiator methionine" description="Removed" evidence="1">
    <location>
        <position position="1"/>
    </location>
</feature>
<feature type="chain" id="PRO_0000124969" description="Large ribosomal subunit protein uL5">
    <location>
        <begin position="2"/>
        <end position="43" status="greater than"/>
    </location>
</feature>
<feature type="non-terminal residue">
    <location>
        <position position="43"/>
    </location>
</feature>
<evidence type="ECO:0000250" key="1"/>
<evidence type="ECO:0000305" key="2"/>
<organism>
    <name type="scientific">Proteus vulgaris</name>
    <dbReference type="NCBI Taxonomy" id="585"/>
    <lineage>
        <taxon>Bacteria</taxon>
        <taxon>Pseudomonadati</taxon>
        <taxon>Pseudomonadota</taxon>
        <taxon>Gammaproteobacteria</taxon>
        <taxon>Enterobacterales</taxon>
        <taxon>Morganellaceae</taxon>
        <taxon>Proteus</taxon>
    </lineage>
</organism>
<reference key="1">
    <citation type="journal article" date="1988" name="J. Mol. Biol.">
        <title>Translational regulation of the spc operon in Escherichia coli. Identification and structural analysis of the target site for S8 repressor protein.</title>
        <authorList>
            <person name="Cerretti D.P."/>
            <person name="Mattheakis L.C."/>
            <person name="Kearney K.R."/>
            <person name="Vu L."/>
            <person name="Nomura M."/>
        </authorList>
    </citation>
    <scope>NUCLEOTIDE SEQUENCE [GENOMIC DNA]</scope>
    <source>
        <strain>NO3254</strain>
    </source>
</reference>
<keyword id="KW-0687">Ribonucleoprotein</keyword>
<keyword id="KW-0689">Ribosomal protein</keyword>
<keyword id="KW-0694">RNA-binding</keyword>
<keyword id="KW-0699">rRNA-binding</keyword>
<keyword id="KW-0820">tRNA-binding</keyword>